<proteinExistence type="inferred from homology"/>
<keyword id="KW-0240">DNA-directed RNA polymerase</keyword>
<keyword id="KW-0460">Magnesium</keyword>
<keyword id="KW-0479">Metal-binding</keyword>
<keyword id="KW-0548">Nucleotidyltransferase</keyword>
<keyword id="KW-1185">Reference proteome</keyword>
<keyword id="KW-0804">Transcription</keyword>
<keyword id="KW-0808">Transferase</keyword>
<keyword id="KW-0862">Zinc</keyword>
<sequence length="1179" mass="132049">MYELNNFESIKIALASPEKIRQWSKGEVKKPETINYRTLKPEKEGLFCEKIFGPTKDWECHCGKYKRVRYKGVVCDRCGVEVTKSKVRRERMGHIELAAPVSHIWYFKGIPSRMGLLLDMSPRSLEKVLYFAAYIVIDPGETGLTEKQVLTEKEYSEAIEKYGSGSFKAGMGAESVKKLLENIDLEELYKDLRSKLKESTGQKRIRTIRRLEVVDAFKHSGNKPEWMILDVIPVIPPELRPMVQLDGGRFATSDLNDLYRRVINRNNRLKRLLDLGAPDIIVRNEKRMLQEAVDALIDNGRRGKPVTGPGNRPLKSLSDMLKGKQGRFRQNLLGKRVDYSGRSVIVVGPELKFYQCGLPKKMALELFKPFVMKKLVEDNHAHNIKSAKRMVEKVKPEVWDVLEEVIREHPVLLNRAPTLHRLGIQAFEPVLVEGKAIKLHPLVCTAYNADFDGDQMAVHVPLSVEAQAEARFLMLAPNNILAPKDGQPITTPTQDMILGSYYLTIEQEGVQGEGMIFKDHDEMLMAYANKAVHLHARVKVRRKLHPEDKGRLVESTVGRFIFNEEIPQNLGFVDRKKDPYALEVDFLCDKKALGKVIDKCFRKHGNTITAIMLDYIKKTGFRYSTQGAITIAVGDMEVPKEKGELISLAEEKVDKYEKAFRRGLISDEERYEKVIETWSETTEKVTEALMATLGSMNNMFIMAHSGARGSKNQIRQLGGMRGLMANATGKTVEIPIKANFREGLTVLEYFISTHGARKGLADTALRTADSGYLTRRLVDVSQDVIIREIDCGSQEGSNIKALKDGNEVIEELYDRIVGRYTLEEVIHPETGEVMIGKNEMILEDMAEEICALGIESVKIRSALKCQTRHGVCAHCYGRNLATGEAVKVGEAVGIIAAQSIGEPGTQLTMRTFHTGGVAGADITQGLPRVEELFEARKPKGLAIISELSGTVKVVETKKKREVIVTDEHGESNTYTIPYGSRMKVRDGEFVELGDEITDGSVNPHDILRIKDVAGVQNYIIKEVQRVYRLQGVDINDKHIEVIVRQMLNKVKIEEAGDTNLLPGSLETIFKYEEENARTIAAGGEPADGKPVLLGITKASLATESFLSAASFQETTRVLTEAAIKGKEDHLIGLKENVIIGKLIPAGTGLKRYKNIALNTEEVAQEEIEDTIEEIVEENL</sequence>
<name>RPOC_ALKOO</name>
<evidence type="ECO:0000255" key="1">
    <source>
        <dbReference type="HAMAP-Rule" id="MF_01322"/>
    </source>
</evidence>
<reference key="1">
    <citation type="submission" date="2007-10" db="EMBL/GenBank/DDBJ databases">
        <title>Complete genome of Alkaliphilus oremlandii OhILAs.</title>
        <authorList>
            <person name="Copeland A."/>
            <person name="Lucas S."/>
            <person name="Lapidus A."/>
            <person name="Barry K."/>
            <person name="Detter J.C."/>
            <person name="Glavina del Rio T."/>
            <person name="Hammon N."/>
            <person name="Israni S."/>
            <person name="Dalin E."/>
            <person name="Tice H."/>
            <person name="Pitluck S."/>
            <person name="Chain P."/>
            <person name="Malfatti S."/>
            <person name="Shin M."/>
            <person name="Vergez L."/>
            <person name="Schmutz J."/>
            <person name="Larimer F."/>
            <person name="Land M."/>
            <person name="Hauser L."/>
            <person name="Kyrpides N."/>
            <person name="Mikhailova N."/>
            <person name="Stolz J.F."/>
            <person name="Dawson A."/>
            <person name="Fisher E."/>
            <person name="Crable B."/>
            <person name="Perera E."/>
            <person name="Lisak J."/>
            <person name="Ranganathan M."/>
            <person name="Basu P."/>
            <person name="Richardson P."/>
        </authorList>
    </citation>
    <scope>NUCLEOTIDE SEQUENCE [LARGE SCALE GENOMIC DNA]</scope>
    <source>
        <strain>OhILAs</strain>
    </source>
</reference>
<gene>
    <name evidence="1" type="primary">rpoC</name>
    <name type="ordered locus">Clos_0485</name>
</gene>
<dbReference type="EC" id="2.7.7.6" evidence="1"/>
<dbReference type="EMBL" id="CP000853">
    <property type="protein sequence ID" value="ABW18047.1"/>
    <property type="molecule type" value="Genomic_DNA"/>
</dbReference>
<dbReference type="RefSeq" id="WP_012158362.1">
    <property type="nucleotide sequence ID" value="NC_009922.1"/>
</dbReference>
<dbReference type="SMR" id="A8MLD3"/>
<dbReference type="STRING" id="350688.Clos_0485"/>
<dbReference type="KEGG" id="aoe:Clos_0485"/>
<dbReference type="eggNOG" id="COG0086">
    <property type="taxonomic scope" value="Bacteria"/>
</dbReference>
<dbReference type="HOGENOM" id="CLU_000524_3_1_9"/>
<dbReference type="OrthoDB" id="9815296at2"/>
<dbReference type="Proteomes" id="UP000000269">
    <property type="component" value="Chromosome"/>
</dbReference>
<dbReference type="GO" id="GO:0000428">
    <property type="term" value="C:DNA-directed RNA polymerase complex"/>
    <property type="evidence" value="ECO:0007669"/>
    <property type="project" value="UniProtKB-KW"/>
</dbReference>
<dbReference type="GO" id="GO:0003677">
    <property type="term" value="F:DNA binding"/>
    <property type="evidence" value="ECO:0007669"/>
    <property type="project" value="UniProtKB-UniRule"/>
</dbReference>
<dbReference type="GO" id="GO:0003899">
    <property type="term" value="F:DNA-directed RNA polymerase activity"/>
    <property type="evidence" value="ECO:0007669"/>
    <property type="project" value="UniProtKB-UniRule"/>
</dbReference>
<dbReference type="GO" id="GO:0000287">
    <property type="term" value="F:magnesium ion binding"/>
    <property type="evidence" value="ECO:0007669"/>
    <property type="project" value="UniProtKB-UniRule"/>
</dbReference>
<dbReference type="GO" id="GO:0008270">
    <property type="term" value="F:zinc ion binding"/>
    <property type="evidence" value="ECO:0007669"/>
    <property type="project" value="UniProtKB-UniRule"/>
</dbReference>
<dbReference type="GO" id="GO:0006351">
    <property type="term" value="P:DNA-templated transcription"/>
    <property type="evidence" value="ECO:0007669"/>
    <property type="project" value="UniProtKB-UniRule"/>
</dbReference>
<dbReference type="CDD" id="cd02655">
    <property type="entry name" value="RNAP_beta'_C"/>
    <property type="match status" value="1"/>
</dbReference>
<dbReference type="CDD" id="cd01609">
    <property type="entry name" value="RNAP_beta'_N"/>
    <property type="match status" value="1"/>
</dbReference>
<dbReference type="FunFam" id="1.10.150.390:FF:000002">
    <property type="entry name" value="DNA-directed RNA polymerase subunit beta"/>
    <property type="match status" value="1"/>
</dbReference>
<dbReference type="FunFam" id="1.10.40.90:FF:000001">
    <property type="entry name" value="DNA-directed RNA polymerase subunit beta"/>
    <property type="match status" value="1"/>
</dbReference>
<dbReference type="FunFam" id="4.10.860.120:FF:000001">
    <property type="entry name" value="DNA-directed RNA polymerase subunit beta"/>
    <property type="match status" value="1"/>
</dbReference>
<dbReference type="Gene3D" id="1.10.132.30">
    <property type="match status" value="1"/>
</dbReference>
<dbReference type="Gene3D" id="1.10.150.390">
    <property type="match status" value="1"/>
</dbReference>
<dbReference type="Gene3D" id="1.10.1790.20">
    <property type="match status" value="1"/>
</dbReference>
<dbReference type="Gene3D" id="1.10.40.90">
    <property type="match status" value="1"/>
</dbReference>
<dbReference type="Gene3D" id="2.40.40.20">
    <property type="match status" value="1"/>
</dbReference>
<dbReference type="Gene3D" id="2.40.50.100">
    <property type="match status" value="1"/>
</dbReference>
<dbReference type="Gene3D" id="4.10.860.120">
    <property type="entry name" value="RNA polymerase II, clamp domain"/>
    <property type="match status" value="1"/>
</dbReference>
<dbReference type="Gene3D" id="1.10.274.100">
    <property type="entry name" value="RNA polymerase Rpb1, domain 3"/>
    <property type="match status" value="2"/>
</dbReference>
<dbReference type="HAMAP" id="MF_01322">
    <property type="entry name" value="RNApol_bact_RpoC"/>
    <property type="match status" value="1"/>
</dbReference>
<dbReference type="InterPro" id="IPR045867">
    <property type="entry name" value="DNA-dir_RpoC_beta_prime"/>
</dbReference>
<dbReference type="InterPro" id="IPR012754">
    <property type="entry name" value="DNA-dir_RpoC_beta_prime_bact"/>
</dbReference>
<dbReference type="InterPro" id="IPR000722">
    <property type="entry name" value="RNA_pol_asu"/>
</dbReference>
<dbReference type="InterPro" id="IPR006592">
    <property type="entry name" value="RNA_pol_N"/>
</dbReference>
<dbReference type="InterPro" id="IPR007080">
    <property type="entry name" value="RNA_pol_Rpb1_1"/>
</dbReference>
<dbReference type="InterPro" id="IPR007066">
    <property type="entry name" value="RNA_pol_Rpb1_3"/>
</dbReference>
<dbReference type="InterPro" id="IPR042102">
    <property type="entry name" value="RNA_pol_Rpb1_3_sf"/>
</dbReference>
<dbReference type="InterPro" id="IPR007083">
    <property type="entry name" value="RNA_pol_Rpb1_4"/>
</dbReference>
<dbReference type="InterPro" id="IPR007081">
    <property type="entry name" value="RNA_pol_Rpb1_5"/>
</dbReference>
<dbReference type="InterPro" id="IPR044893">
    <property type="entry name" value="RNA_pol_Rpb1_clamp_domain"/>
</dbReference>
<dbReference type="InterPro" id="IPR038120">
    <property type="entry name" value="Rpb1_funnel_sf"/>
</dbReference>
<dbReference type="NCBIfam" id="TIGR02386">
    <property type="entry name" value="rpoC_TIGR"/>
    <property type="match status" value="1"/>
</dbReference>
<dbReference type="PANTHER" id="PTHR19376">
    <property type="entry name" value="DNA-DIRECTED RNA POLYMERASE"/>
    <property type="match status" value="1"/>
</dbReference>
<dbReference type="PANTHER" id="PTHR19376:SF54">
    <property type="entry name" value="DNA-DIRECTED RNA POLYMERASE SUBUNIT BETA"/>
    <property type="match status" value="1"/>
</dbReference>
<dbReference type="Pfam" id="PF04997">
    <property type="entry name" value="RNA_pol_Rpb1_1"/>
    <property type="match status" value="1"/>
</dbReference>
<dbReference type="Pfam" id="PF00623">
    <property type="entry name" value="RNA_pol_Rpb1_2"/>
    <property type="match status" value="1"/>
</dbReference>
<dbReference type="Pfam" id="PF04983">
    <property type="entry name" value="RNA_pol_Rpb1_3"/>
    <property type="match status" value="1"/>
</dbReference>
<dbReference type="Pfam" id="PF05000">
    <property type="entry name" value="RNA_pol_Rpb1_4"/>
    <property type="match status" value="1"/>
</dbReference>
<dbReference type="Pfam" id="PF04998">
    <property type="entry name" value="RNA_pol_Rpb1_5"/>
    <property type="match status" value="1"/>
</dbReference>
<dbReference type="SMART" id="SM00663">
    <property type="entry name" value="RPOLA_N"/>
    <property type="match status" value="1"/>
</dbReference>
<dbReference type="SUPFAM" id="SSF64484">
    <property type="entry name" value="beta and beta-prime subunits of DNA dependent RNA-polymerase"/>
    <property type="match status" value="1"/>
</dbReference>
<organism>
    <name type="scientific">Alkaliphilus oremlandii (strain OhILAs)</name>
    <name type="common">Clostridium oremlandii (strain OhILAs)</name>
    <dbReference type="NCBI Taxonomy" id="350688"/>
    <lineage>
        <taxon>Bacteria</taxon>
        <taxon>Bacillati</taxon>
        <taxon>Bacillota</taxon>
        <taxon>Clostridia</taxon>
        <taxon>Peptostreptococcales</taxon>
        <taxon>Natronincolaceae</taxon>
        <taxon>Alkaliphilus</taxon>
    </lineage>
</organism>
<protein>
    <recommendedName>
        <fullName evidence="1">DNA-directed RNA polymerase subunit beta'</fullName>
        <shortName evidence="1">RNAP subunit beta'</shortName>
        <ecNumber evidence="1">2.7.7.6</ecNumber>
    </recommendedName>
    <alternativeName>
        <fullName evidence="1">RNA polymerase subunit beta'</fullName>
    </alternativeName>
    <alternativeName>
        <fullName evidence="1">Transcriptase subunit beta'</fullName>
    </alternativeName>
</protein>
<comment type="function">
    <text evidence="1">DNA-dependent RNA polymerase catalyzes the transcription of DNA into RNA using the four ribonucleoside triphosphates as substrates.</text>
</comment>
<comment type="catalytic activity">
    <reaction evidence="1">
        <text>RNA(n) + a ribonucleoside 5'-triphosphate = RNA(n+1) + diphosphate</text>
        <dbReference type="Rhea" id="RHEA:21248"/>
        <dbReference type="Rhea" id="RHEA-COMP:14527"/>
        <dbReference type="Rhea" id="RHEA-COMP:17342"/>
        <dbReference type="ChEBI" id="CHEBI:33019"/>
        <dbReference type="ChEBI" id="CHEBI:61557"/>
        <dbReference type="ChEBI" id="CHEBI:140395"/>
        <dbReference type="EC" id="2.7.7.6"/>
    </reaction>
</comment>
<comment type="cofactor">
    <cofactor evidence="1">
        <name>Mg(2+)</name>
        <dbReference type="ChEBI" id="CHEBI:18420"/>
    </cofactor>
    <text evidence="1">Binds 1 Mg(2+) ion per subunit.</text>
</comment>
<comment type="cofactor">
    <cofactor evidence="1">
        <name>Zn(2+)</name>
        <dbReference type="ChEBI" id="CHEBI:29105"/>
    </cofactor>
    <text evidence="1">Binds 2 Zn(2+) ions per subunit.</text>
</comment>
<comment type="subunit">
    <text evidence="1">The RNAP catalytic core consists of 2 alpha, 1 beta, 1 beta' and 1 omega subunit. When a sigma factor is associated with the core the holoenzyme is formed, which can initiate transcription.</text>
</comment>
<comment type="similarity">
    <text evidence="1">Belongs to the RNA polymerase beta' chain family.</text>
</comment>
<accession>A8MLD3</accession>
<feature type="chain" id="PRO_0000353285" description="DNA-directed RNA polymerase subunit beta'">
    <location>
        <begin position="1"/>
        <end position="1179"/>
    </location>
</feature>
<feature type="binding site" evidence="1">
    <location>
        <position position="60"/>
    </location>
    <ligand>
        <name>Zn(2+)</name>
        <dbReference type="ChEBI" id="CHEBI:29105"/>
        <label>1</label>
    </ligand>
</feature>
<feature type="binding site" evidence="1">
    <location>
        <position position="62"/>
    </location>
    <ligand>
        <name>Zn(2+)</name>
        <dbReference type="ChEBI" id="CHEBI:29105"/>
        <label>1</label>
    </ligand>
</feature>
<feature type="binding site" evidence="1">
    <location>
        <position position="75"/>
    </location>
    <ligand>
        <name>Zn(2+)</name>
        <dbReference type="ChEBI" id="CHEBI:29105"/>
        <label>1</label>
    </ligand>
</feature>
<feature type="binding site" evidence="1">
    <location>
        <position position="78"/>
    </location>
    <ligand>
        <name>Zn(2+)</name>
        <dbReference type="ChEBI" id="CHEBI:29105"/>
        <label>1</label>
    </ligand>
</feature>
<feature type="binding site" evidence="1">
    <location>
        <position position="450"/>
    </location>
    <ligand>
        <name>Mg(2+)</name>
        <dbReference type="ChEBI" id="CHEBI:18420"/>
    </ligand>
</feature>
<feature type="binding site" evidence="1">
    <location>
        <position position="452"/>
    </location>
    <ligand>
        <name>Mg(2+)</name>
        <dbReference type="ChEBI" id="CHEBI:18420"/>
    </ligand>
</feature>
<feature type="binding site" evidence="1">
    <location>
        <position position="454"/>
    </location>
    <ligand>
        <name>Mg(2+)</name>
        <dbReference type="ChEBI" id="CHEBI:18420"/>
    </ligand>
</feature>
<feature type="binding site" evidence="1">
    <location>
        <position position="791"/>
    </location>
    <ligand>
        <name>Zn(2+)</name>
        <dbReference type="ChEBI" id="CHEBI:29105"/>
        <label>2</label>
    </ligand>
</feature>
<feature type="binding site" evidence="1">
    <location>
        <position position="865"/>
    </location>
    <ligand>
        <name>Zn(2+)</name>
        <dbReference type="ChEBI" id="CHEBI:29105"/>
        <label>2</label>
    </ligand>
</feature>
<feature type="binding site" evidence="1">
    <location>
        <position position="872"/>
    </location>
    <ligand>
        <name>Zn(2+)</name>
        <dbReference type="ChEBI" id="CHEBI:29105"/>
        <label>2</label>
    </ligand>
</feature>
<feature type="binding site" evidence="1">
    <location>
        <position position="875"/>
    </location>
    <ligand>
        <name>Zn(2+)</name>
        <dbReference type="ChEBI" id="CHEBI:29105"/>
        <label>2</label>
    </ligand>
</feature>